<protein>
    <recommendedName>
        <fullName>Uncharacterized protein C4G3.03</fullName>
    </recommendedName>
</protein>
<feature type="chain" id="PRO_0000343217" description="Uncharacterized protein C4G3.03">
    <location>
        <begin position="1"/>
        <end position="347"/>
    </location>
</feature>
<name>YC03_SCHPO</name>
<keyword id="KW-0963">Cytoplasm</keyword>
<keyword id="KW-0539">Nucleus</keyword>
<keyword id="KW-1185">Reference proteome</keyword>
<comment type="subcellular location">
    <subcellularLocation>
        <location evidence="1">Cytoplasm</location>
    </subcellularLocation>
    <subcellularLocation>
        <location evidence="1">Nucleus</location>
    </subcellularLocation>
</comment>
<gene>
    <name type="ORF">SPCC4G3.03</name>
</gene>
<accession>P87229</accession>
<sequence>MTVDNRCSNSSLCLRNVTPKQHPARVCSNHWQLKNLISTQNTGEESNPIYYTNSVFVWKIYPNSEKVVQVGQGLSFKPLSLLGKCGYIAAGGQLGEFDYWSPTSKQTHMKLCDQHNNGIEIHRRNCDSHAEALISSNDHTIKVVDLEHGLLRKQLHFPVNMNHASVSNDGRFMVCVGDSPQVFFYEIDRSGEYHLRHTTVADTTDSSFCTSISQRNELFAVASQDSSLSVFDVRYLRTPMLTKTSSRPDPNGSIRSCHFTPPNGGPLDLLLYSEGFSYSHLLDLRTGKDVELVLPSEDRFFSPASQDIFGSCFADDGSSVYVASATHLYEWNIDKRSRICFPSYQLL</sequence>
<dbReference type="EMBL" id="CU329672">
    <property type="protein sequence ID" value="CAB09780.1"/>
    <property type="molecule type" value="Genomic_DNA"/>
</dbReference>
<dbReference type="PIR" id="T41373">
    <property type="entry name" value="T41373"/>
</dbReference>
<dbReference type="RefSeq" id="NP_587835.1">
    <property type="nucleotide sequence ID" value="NM_001022828.2"/>
</dbReference>
<dbReference type="SMR" id="P87229"/>
<dbReference type="STRING" id="284812.P87229"/>
<dbReference type="PaxDb" id="4896-SPCC4G3.03.1"/>
<dbReference type="EnsemblFungi" id="SPCC4G3.03.1">
    <property type="protein sequence ID" value="SPCC4G3.03.1:pep"/>
    <property type="gene ID" value="SPCC4G3.03"/>
</dbReference>
<dbReference type="KEGG" id="spo:2539458"/>
<dbReference type="PomBase" id="SPCC4G3.03"/>
<dbReference type="VEuPathDB" id="FungiDB:SPCC4G3.03"/>
<dbReference type="eggNOG" id="KOG4532">
    <property type="taxonomic scope" value="Eukaryota"/>
</dbReference>
<dbReference type="HOGENOM" id="CLU_799638_0_0_1"/>
<dbReference type="InParanoid" id="P87229"/>
<dbReference type="OMA" id="NMNHASV"/>
<dbReference type="PhylomeDB" id="P87229"/>
<dbReference type="PRO" id="PR:P87229"/>
<dbReference type="Proteomes" id="UP000002485">
    <property type="component" value="Chromosome III"/>
</dbReference>
<dbReference type="GO" id="GO:0005829">
    <property type="term" value="C:cytosol"/>
    <property type="evidence" value="ECO:0007005"/>
    <property type="project" value="PomBase"/>
</dbReference>
<dbReference type="GO" id="GO:0005634">
    <property type="term" value="C:nucleus"/>
    <property type="evidence" value="ECO:0007005"/>
    <property type="project" value="PomBase"/>
</dbReference>
<dbReference type="Gene3D" id="2.130.10.10">
    <property type="entry name" value="YVTN repeat-like/Quinoprotein amine dehydrogenase"/>
    <property type="match status" value="1"/>
</dbReference>
<dbReference type="InterPro" id="IPR019417">
    <property type="entry name" value="DUF2415"/>
</dbReference>
<dbReference type="InterPro" id="IPR015943">
    <property type="entry name" value="WD40/YVTN_repeat-like_dom_sf"/>
</dbReference>
<dbReference type="PANTHER" id="PTHR43991:SF9">
    <property type="entry name" value="DUF2415 DOMAIN-CONTAINING PROTEIN"/>
    <property type="match status" value="1"/>
</dbReference>
<dbReference type="PANTHER" id="PTHR43991">
    <property type="entry name" value="WD REPEAT PROTEIN (AFU_ORTHOLOGUE AFUA_8G05640)-RELATED"/>
    <property type="match status" value="1"/>
</dbReference>
<dbReference type="Pfam" id="PF10313">
    <property type="entry name" value="DUF2415"/>
    <property type="match status" value="1"/>
</dbReference>
<dbReference type="SUPFAM" id="SSF101908">
    <property type="entry name" value="Putative isomerase YbhE"/>
    <property type="match status" value="1"/>
</dbReference>
<proteinExistence type="predicted"/>
<organism>
    <name type="scientific">Schizosaccharomyces pombe (strain 972 / ATCC 24843)</name>
    <name type="common">Fission yeast</name>
    <dbReference type="NCBI Taxonomy" id="284812"/>
    <lineage>
        <taxon>Eukaryota</taxon>
        <taxon>Fungi</taxon>
        <taxon>Dikarya</taxon>
        <taxon>Ascomycota</taxon>
        <taxon>Taphrinomycotina</taxon>
        <taxon>Schizosaccharomycetes</taxon>
        <taxon>Schizosaccharomycetales</taxon>
        <taxon>Schizosaccharomycetaceae</taxon>
        <taxon>Schizosaccharomyces</taxon>
    </lineage>
</organism>
<evidence type="ECO:0000269" key="1">
    <source>
    </source>
</evidence>
<reference key="1">
    <citation type="journal article" date="2002" name="Nature">
        <title>The genome sequence of Schizosaccharomyces pombe.</title>
        <authorList>
            <person name="Wood V."/>
            <person name="Gwilliam R."/>
            <person name="Rajandream M.A."/>
            <person name="Lyne M.H."/>
            <person name="Lyne R."/>
            <person name="Stewart A."/>
            <person name="Sgouros J.G."/>
            <person name="Peat N."/>
            <person name="Hayles J."/>
            <person name="Baker S.G."/>
            <person name="Basham D."/>
            <person name="Bowman S."/>
            <person name="Brooks K."/>
            <person name="Brown D."/>
            <person name="Brown S."/>
            <person name="Chillingworth T."/>
            <person name="Churcher C.M."/>
            <person name="Collins M."/>
            <person name="Connor R."/>
            <person name="Cronin A."/>
            <person name="Davis P."/>
            <person name="Feltwell T."/>
            <person name="Fraser A."/>
            <person name="Gentles S."/>
            <person name="Goble A."/>
            <person name="Hamlin N."/>
            <person name="Harris D.E."/>
            <person name="Hidalgo J."/>
            <person name="Hodgson G."/>
            <person name="Holroyd S."/>
            <person name="Hornsby T."/>
            <person name="Howarth S."/>
            <person name="Huckle E.J."/>
            <person name="Hunt S."/>
            <person name="Jagels K."/>
            <person name="James K.D."/>
            <person name="Jones L."/>
            <person name="Jones M."/>
            <person name="Leather S."/>
            <person name="McDonald S."/>
            <person name="McLean J."/>
            <person name="Mooney P."/>
            <person name="Moule S."/>
            <person name="Mungall K.L."/>
            <person name="Murphy L.D."/>
            <person name="Niblett D."/>
            <person name="Odell C."/>
            <person name="Oliver K."/>
            <person name="O'Neil S."/>
            <person name="Pearson D."/>
            <person name="Quail M.A."/>
            <person name="Rabbinowitsch E."/>
            <person name="Rutherford K.M."/>
            <person name="Rutter S."/>
            <person name="Saunders D."/>
            <person name="Seeger K."/>
            <person name="Sharp S."/>
            <person name="Skelton J."/>
            <person name="Simmonds M.N."/>
            <person name="Squares R."/>
            <person name="Squares S."/>
            <person name="Stevens K."/>
            <person name="Taylor K."/>
            <person name="Taylor R.G."/>
            <person name="Tivey A."/>
            <person name="Walsh S.V."/>
            <person name="Warren T."/>
            <person name="Whitehead S."/>
            <person name="Woodward J.R."/>
            <person name="Volckaert G."/>
            <person name="Aert R."/>
            <person name="Robben J."/>
            <person name="Grymonprez B."/>
            <person name="Weltjens I."/>
            <person name="Vanstreels E."/>
            <person name="Rieger M."/>
            <person name="Schaefer M."/>
            <person name="Mueller-Auer S."/>
            <person name="Gabel C."/>
            <person name="Fuchs M."/>
            <person name="Duesterhoeft A."/>
            <person name="Fritzc C."/>
            <person name="Holzer E."/>
            <person name="Moestl D."/>
            <person name="Hilbert H."/>
            <person name="Borzym K."/>
            <person name="Langer I."/>
            <person name="Beck A."/>
            <person name="Lehrach H."/>
            <person name="Reinhardt R."/>
            <person name="Pohl T.M."/>
            <person name="Eger P."/>
            <person name="Zimmermann W."/>
            <person name="Wedler H."/>
            <person name="Wambutt R."/>
            <person name="Purnelle B."/>
            <person name="Goffeau A."/>
            <person name="Cadieu E."/>
            <person name="Dreano S."/>
            <person name="Gloux S."/>
            <person name="Lelaure V."/>
            <person name="Mottier S."/>
            <person name="Galibert F."/>
            <person name="Aves S.J."/>
            <person name="Xiang Z."/>
            <person name="Hunt C."/>
            <person name="Moore K."/>
            <person name="Hurst S.M."/>
            <person name="Lucas M."/>
            <person name="Rochet M."/>
            <person name="Gaillardin C."/>
            <person name="Tallada V.A."/>
            <person name="Garzon A."/>
            <person name="Thode G."/>
            <person name="Daga R.R."/>
            <person name="Cruzado L."/>
            <person name="Jimenez J."/>
            <person name="Sanchez M."/>
            <person name="del Rey F."/>
            <person name="Benito J."/>
            <person name="Dominguez A."/>
            <person name="Revuelta J.L."/>
            <person name="Moreno S."/>
            <person name="Armstrong J."/>
            <person name="Forsburg S.L."/>
            <person name="Cerutti L."/>
            <person name="Lowe T."/>
            <person name="McCombie W.R."/>
            <person name="Paulsen I."/>
            <person name="Potashkin J."/>
            <person name="Shpakovski G.V."/>
            <person name="Ussery D."/>
            <person name="Barrell B.G."/>
            <person name="Nurse P."/>
        </authorList>
    </citation>
    <scope>NUCLEOTIDE SEQUENCE [LARGE SCALE GENOMIC DNA]</scope>
    <source>
        <strain>972 / ATCC 24843</strain>
    </source>
</reference>
<reference key="2">
    <citation type="journal article" date="2006" name="Nat. Biotechnol.">
        <title>ORFeome cloning and global analysis of protein localization in the fission yeast Schizosaccharomyces pombe.</title>
        <authorList>
            <person name="Matsuyama A."/>
            <person name="Arai R."/>
            <person name="Yashiroda Y."/>
            <person name="Shirai A."/>
            <person name="Kamata A."/>
            <person name="Sekido S."/>
            <person name="Kobayashi Y."/>
            <person name="Hashimoto A."/>
            <person name="Hamamoto M."/>
            <person name="Hiraoka Y."/>
            <person name="Horinouchi S."/>
            <person name="Yoshida M."/>
        </authorList>
    </citation>
    <scope>SUBCELLULAR LOCATION [LARGE SCALE ANALYSIS]</scope>
</reference>